<evidence type="ECO:0000255" key="1">
    <source>
        <dbReference type="PROSITE-ProRule" id="PRU00303"/>
    </source>
</evidence>
<evidence type="ECO:0000256" key="2">
    <source>
        <dbReference type="SAM" id="MobiDB-lite"/>
    </source>
</evidence>
<evidence type="ECO:0000269" key="3">
    <source>
    </source>
</evidence>
<evidence type="ECO:0000269" key="4">
    <source>
    </source>
</evidence>
<evidence type="ECO:0000269" key="5">
    <source>
    </source>
</evidence>
<evidence type="ECO:0000269" key="6">
    <source>
    </source>
</evidence>
<evidence type="ECO:0000269" key="7">
    <source>
    </source>
</evidence>
<evidence type="ECO:0000269" key="8">
    <source>
    </source>
</evidence>
<evidence type="ECO:0000305" key="9"/>
<evidence type="ECO:0007829" key="10">
    <source>
        <dbReference type="PDB" id="6WTI"/>
    </source>
</evidence>
<evidence type="ECO:0007829" key="11">
    <source>
        <dbReference type="PDB" id="7CUB"/>
    </source>
</evidence>
<evidence type="ECO:0007829" key="12">
    <source>
        <dbReference type="PDB" id="7N9Z"/>
    </source>
</evidence>
<sequence>MRLRKYNKSLGWLSLFAGTVLLSGCNSALLDPKGQIGLEQRSLILTAFGLMLIVVIPAILMAVGFAWKYRASNKDAKYSPNWSHSNKVEAVVWTVPILIIIFLAVLTWKTTHALEPSKPLAHDEKPITIEVVSMDWKWFFIYPEQGIATVNEIAFPANTPVYFKVTSNSVMNSFFIPRLGSQIYAMAGMQTRLHLIANEPGTYDGISASYSGPGFSGMKFKAIATPDRAAFDQWVAKAKQSPNTMSDMAAFEKLAAPSEYNQVEYFSNVKPDLFADVINKFMAHGKSMDMTQPEGEHSAHEGMEGMDMSHAESAH</sequence>
<accession>P0ABJ1</accession>
<accession>P18400</accession>
<accession>Q2MBZ4</accession>
<name>CYOA_ECOLI</name>
<reference key="1">
    <citation type="journal article" date="1990" name="J. Biol. Chem.">
        <title>The sequence of the cyo operon indicates substantial structural similarities between the cytochrome o ubiquinol oxidase of Escherichia coli and the aa3-type family of cytochrome c oxidases.</title>
        <authorList>
            <person name="Chepuri V."/>
            <person name="Lemieux L."/>
            <person name="Au D.C.T."/>
            <person name="Gennis R.B."/>
        </authorList>
    </citation>
    <scope>NUCLEOTIDE SEQUENCE [GENOMIC DNA]</scope>
    <source>
        <strain>K12</strain>
    </source>
</reference>
<reference key="2">
    <citation type="submission" date="1997-01" db="EMBL/GenBank/DDBJ databases">
        <title>Sequence of minutes 4-25 of Escherichia coli.</title>
        <authorList>
            <person name="Chung E."/>
            <person name="Allen E."/>
            <person name="Araujo R."/>
            <person name="Aparicio A.M."/>
            <person name="Davis K."/>
            <person name="Duncan M."/>
            <person name="Federspiel N."/>
            <person name="Hyman R."/>
            <person name="Kalman S."/>
            <person name="Komp C."/>
            <person name="Kurdi O."/>
            <person name="Lew H."/>
            <person name="Lin D."/>
            <person name="Namath A."/>
            <person name="Oefner P."/>
            <person name="Roberts D."/>
            <person name="Schramm S."/>
            <person name="Davis R.W."/>
        </authorList>
    </citation>
    <scope>NUCLEOTIDE SEQUENCE [LARGE SCALE GENOMIC DNA]</scope>
    <source>
        <strain>K12 / MG1655 / ATCC 47076</strain>
    </source>
</reference>
<reference key="3">
    <citation type="journal article" date="1997" name="Science">
        <title>The complete genome sequence of Escherichia coli K-12.</title>
        <authorList>
            <person name="Blattner F.R."/>
            <person name="Plunkett G. III"/>
            <person name="Bloch C.A."/>
            <person name="Perna N.T."/>
            <person name="Burland V."/>
            <person name="Riley M."/>
            <person name="Collado-Vides J."/>
            <person name="Glasner J.D."/>
            <person name="Rode C.K."/>
            <person name="Mayhew G.F."/>
            <person name="Gregor J."/>
            <person name="Davis N.W."/>
            <person name="Kirkpatrick H.A."/>
            <person name="Goeden M.A."/>
            <person name="Rose D.J."/>
            <person name="Mau B."/>
            <person name="Shao Y."/>
        </authorList>
    </citation>
    <scope>NUCLEOTIDE SEQUENCE [LARGE SCALE GENOMIC DNA]</scope>
    <source>
        <strain>K12 / MG1655 / ATCC 47076</strain>
    </source>
</reference>
<reference key="4">
    <citation type="journal article" date="2006" name="Mol. Syst. Biol.">
        <title>Highly accurate genome sequences of Escherichia coli K-12 strains MG1655 and W3110.</title>
        <authorList>
            <person name="Hayashi K."/>
            <person name="Morooka N."/>
            <person name="Yamamoto Y."/>
            <person name="Fujita K."/>
            <person name="Isono K."/>
            <person name="Choi S."/>
            <person name="Ohtsubo E."/>
            <person name="Baba T."/>
            <person name="Wanner B.L."/>
            <person name="Mori H."/>
            <person name="Horiuchi T."/>
        </authorList>
    </citation>
    <scope>NUCLEOTIDE SEQUENCE [LARGE SCALE GENOMIC DNA]</scope>
    <source>
        <strain>K12 / W3110 / ATCC 27325 / DSM 5911</strain>
    </source>
</reference>
<reference key="5">
    <citation type="journal article" date="1990" name="J. Biol. Chem.">
        <title>Transcriptional regulation of the cytochrome b562-o complex in Escherichia coli. Gene expression and molecular characterization of the promoter.</title>
        <authorList>
            <person name="Minagawa J."/>
            <person name="Nakamura H."/>
            <person name="Yamato I."/>
            <person name="Mogi T."/>
            <person name="Anraku Y."/>
        </authorList>
    </citation>
    <scope>NUCLEOTIDE SEQUENCE [GENOMIC DNA] OF 1-80</scope>
</reference>
<reference key="6">
    <citation type="journal article" date="1993" name="Mol. Microbiol.">
        <title>AmpG, a signal transducer in chromosomal beta-lactamase induction.</title>
        <authorList>
            <person name="Lindquist S."/>
            <person name="Weston-Hafer K."/>
            <person name="Schmidt H."/>
            <person name="Pul C."/>
            <person name="Korfmann G."/>
            <person name="Erickson J."/>
            <person name="Sanders C."/>
            <person name="Martin H.H."/>
            <person name="Normark S."/>
        </authorList>
    </citation>
    <scope>NUCLEOTIDE SEQUENCE [GENOMIC DNA] OF 1-66</scope>
</reference>
<reference key="7">
    <citation type="journal article" date="1992" name="Biochemistry">
        <title>Modified, large-scale purification of the cytochrome o complex (bo-type oxidase) of Escherichia coli yields a two heme/one copper terminal oxidase with high specific activity.</title>
        <authorList>
            <person name="Minghetti K.C."/>
            <person name="Goswitz V.C."/>
            <person name="Gabriel N.E."/>
            <person name="Hill J.J."/>
            <person name="Barassi C.A."/>
            <person name="Georgiou C.D."/>
            <person name="Chan S.I."/>
            <person name="Gennis R.B."/>
        </authorList>
    </citation>
    <scope>PROTEIN SEQUENCE OF 153-171</scope>
</reference>
<reference key="8">
    <citation type="journal article" date="1983" name="Proc. Natl. Acad. Sci. U.S.A.">
        <title>Reconstitution of active transport in proteoliposomes containing cytochrome o oxidase and lac carrier protein purified from Escherichia coli.</title>
        <authorList>
            <person name="Matsushita K."/>
            <person name="Patel L."/>
            <person name="Gennis R.B."/>
            <person name="Kaback H.R."/>
        </authorList>
    </citation>
    <scope>FUNCTION IN UBIQUINOL OXIDATION</scope>
    <scope>FUNCTION IN PROTON ELECTROCHEMICAL GRADIENT GENERATION</scope>
    <scope>SUBUNIT</scope>
</reference>
<reference key="9">
    <citation type="journal article" date="1984" name="J. Biol. Chem.">
        <title>Terminal oxidases of Escherichia coli aerobic respiratory chain. I. Purification and properties of cytochrome b562-o complex from cells in the early exponential phase of aerobic growth.</title>
        <authorList>
            <person name="Kita K."/>
            <person name="Konishi K."/>
            <person name="Anraku Y."/>
        </authorList>
    </citation>
    <scope>ACTIVITY REGULATION</scope>
    <scope>SUBCELLULAR LOCATION</scope>
    <source>
        <strain>K12 / KL251/ORF4</strain>
    </source>
</reference>
<reference key="10">
    <citation type="journal article" date="1990" name="J. Biol. Chem.">
        <title>The use of gene fusions to determine the topology of all of the subunits of the cytochrome o terminal oxidase complex of Escherichia coli.</title>
        <authorList>
            <person name="Chepuri V."/>
            <person name="Gennis R.B."/>
        </authorList>
    </citation>
    <scope>TOPOLOGY</scope>
</reference>
<reference key="11">
    <citation type="journal article" date="1990" name="Biochim. Biophys. Acta">
        <title>Recent studies of the cytochrome o terminal oxidase complex of Escherichia coli.</title>
        <authorList>
            <person name="Chepuri V."/>
            <person name="Lemieux L."/>
            <person name="Hill J."/>
            <person name="Alben J.O."/>
            <person name="Gennis R.B."/>
        </authorList>
    </citation>
    <scope>TOPOLOGY</scope>
</reference>
<reference key="12">
    <citation type="journal article" date="2005" name="J. Biol. Chem.">
        <title>Protein complexes of the Escherichia coli cell envelope.</title>
        <authorList>
            <person name="Stenberg F."/>
            <person name="Chovanec P."/>
            <person name="Maslen S.L."/>
            <person name="Robinson C.V."/>
            <person name="Ilag L."/>
            <person name="von Heijne G."/>
            <person name="Daley D.O."/>
        </authorList>
    </citation>
    <scope>SUBUNIT</scope>
    <scope>SUBCELLULAR LOCATION</scope>
    <source>
        <strain>BL21-DE3</strain>
    </source>
</reference>
<reference key="13">
    <citation type="journal article" date="2005" name="Science">
        <title>Global topology analysis of the Escherichia coli inner membrane proteome.</title>
        <authorList>
            <person name="Daley D.O."/>
            <person name="Rapp M."/>
            <person name="Granseth E."/>
            <person name="Melen K."/>
            <person name="Drew D."/>
            <person name="von Heijne G."/>
        </authorList>
    </citation>
    <scope>TOPOLOGY [LARGE SCALE ANALYSIS]</scope>
    <source>
        <strain>K12 / MG1655 / ATCC 47076</strain>
    </source>
</reference>
<reference key="14">
    <citation type="journal article" date="2009" name="J. Bacteriol.">
        <title>Respiration of Escherichia coli can be fully uncoupled via the nonelectrogenic terminal cytochrome bd-II oxidase.</title>
        <authorList>
            <person name="Bekker M."/>
            <person name="de Vries S."/>
            <person name="Ter Beek A."/>
            <person name="Hellingwerf K.J."/>
            <person name="de Mattos M.J."/>
        </authorList>
    </citation>
    <scope>FUNCTION AS AN OXIDASE</scope>
    <scope>FUNCTION AS A PROTON PUMP</scope>
    <scope>DISRUPTION PHENOTYPE</scope>
    <source>
        <strain>K12</strain>
    </source>
</reference>
<reference key="15">
    <citation type="journal article" date="2012" name="Appl. Environ. Microbiol.">
        <title>Uncoupling of substrate-level phosphorylation in Escherichia coli during glucose-limited growth.</title>
        <authorList>
            <person name="Sharma P."/>
            <person name="Hellingwerf K.J."/>
            <person name="de Mattos M.J."/>
            <person name="Bekker M."/>
        </authorList>
    </citation>
    <scope>FUNCTION AS AN OXIDASE</scope>
    <scope>FUNCTION IN PROTON TRANSLOCATION</scope>
    <scope>DISRUPTION PHENOTYPE</scope>
    <source>
        <strain>K12</strain>
    </source>
</reference>
<reference key="16">
    <citation type="journal article" date="1995" name="Proc. Natl. Acad. Sci. U.S.A.">
        <title>Crystal structure of the membrane-exposed domain from a respiratory quinol oxidase complex with an engineered dinuclear copper center.</title>
        <authorList>
            <person name="Wilmanns M."/>
            <person name="Lappalainen P."/>
            <person name="Kelly M."/>
            <person name="Sauer-Eriksson E."/>
            <person name="Saraste M."/>
        </authorList>
    </citation>
    <scope>X-RAY CRYSTALLOGRAPHY (2.5 ANGSTROMS) OF 111-315</scope>
</reference>
<reference key="17">
    <citation type="journal article" date="2000" name="Nat. Struct. Biol.">
        <title>The structure of the ubiquinol oxidase from Escherichia coli and its ubiquinone binding site.</title>
        <authorList>
            <person name="Abramson J."/>
            <person name="Riistama S."/>
            <person name="Larsson G."/>
            <person name="Jasaitis A."/>
            <person name="Svensson-Ek M."/>
            <person name="Puustinen A."/>
            <person name="Iwata S."/>
            <person name="Wikstrom M."/>
        </authorList>
    </citation>
    <scope>X-RAY CRYSTALLOGRAPHY (3.5 ANGSTROMS)</scope>
    <scope>SUBUNIT</scope>
</reference>
<feature type="signal peptide" evidence="1">
    <location>
        <begin position="1"/>
        <end position="24"/>
    </location>
</feature>
<feature type="chain" id="PRO_0000006071" description="Cytochrome bo(3) ubiquinol oxidase subunit 2">
    <location>
        <begin position="25"/>
        <end position="315"/>
    </location>
</feature>
<feature type="topological domain" description="Periplasmic" evidence="9">
    <location>
        <begin position="25"/>
        <end position="50"/>
    </location>
</feature>
<feature type="transmembrane region" description="Helical" evidence="9">
    <location>
        <begin position="51"/>
        <end position="68"/>
    </location>
</feature>
<feature type="topological domain" description="Cytoplasmic" evidence="9">
    <location>
        <begin position="69"/>
        <end position="92"/>
    </location>
</feature>
<feature type="transmembrane region" description="Helical" evidence="9">
    <location>
        <begin position="93"/>
        <end position="111"/>
    </location>
</feature>
<feature type="topological domain" description="Periplasmic" evidence="9">
    <location>
        <begin position="112"/>
        <end position="315"/>
    </location>
</feature>
<feature type="region of interest" description="Disordered" evidence="2">
    <location>
        <begin position="288"/>
        <end position="315"/>
    </location>
</feature>
<feature type="compositionally biased region" description="Basic and acidic residues" evidence="2">
    <location>
        <begin position="294"/>
        <end position="315"/>
    </location>
</feature>
<feature type="lipid moiety-binding region" description="N-palmitoyl cysteine" evidence="1">
    <location>
        <position position="25"/>
    </location>
</feature>
<feature type="lipid moiety-binding region" description="S-diacylglycerol cysteine" evidence="1">
    <location>
        <position position="25"/>
    </location>
</feature>
<feature type="turn" evidence="12">
    <location>
        <begin position="28"/>
        <end position="30"/>
    </location>
</feature>
<feature type="helix" evidence="12">
    <location>
        <begin position="35"/>
        <end position="68"/>
    </location>
</feature>
<feature type="strand" evidence="11">
    <location>
        <begin position="70"/>
        <end position="72"/>
    </location>
</feature>
<feature type="strand" evidence="12">
    <location>
        <begin position="74"/>
        <end position="76"/>
    </location>
</feature>
<feature type="helix" evidence="12">
    <location>
        <begin position="86"/>
        <end position="113"/>
    </location>
</feature>
<feature type="strand" evidence="10">
    <location>
        <begin position="116"/>
        <end position="118"/>
    </location>
</feature>
<feature type="strand" evidence="10">
    <location>
        <begin position="122"/>
        <end position="124"/>
    </location>
</feature>
<feature type="strand" evidence="12">
    <location>
        <begin position="127"/>
        <end position="134"/>
    </location>
</feature>
<feature type="strand" evidence="12">
    <location>
        <begin position="137"/>
        <end position="142"/>
    </location>
</feature>
<feature type="turn" evidence="12">
    <location>
        <begin position="143"/>
        <end position="146"/>
    </location>
</feature>
<feature type="strand" evidence="12">
    <location>
        <begin position="147"/>
        <end position="156"/>
    </location>
</feature>
<feature type="strand" evidence="12">
    <location>
        <begin position="161"/>
        <end position="170"/>
    </location>
</feature>
<feature type="strand" evidence="12">
    <location>
        <begin position="172"/>
        <end position="175"/>
    </location>
</feature>
<feature type="turn" evidence="12">
    <location>
        <begin position="177"/>
        <end position="179"/>
    </location>
</feature>
<feature type="strand" evidence="12">
    <location>
        <begin position="183"/>
        <end position="185"/>
    </location>
</feature>
<feature type="strand" evidence="12">
    <location>
        <begin position="191"/>
        <end position="195"/>
    </location>
</feature>
<feature type="strand" evidence="12">
    <location>
        <begin position="197"/>
        <end position="199"/>
    </location>
</feature>
<feature type="strand" evidence="12">
    <location>
        <begin position="201"/>
        <end position="207"/>
    </location>
</feature>
<feature type="helix" evidence="12">
    <location>
        <begin position="215"/>
        <end position="217"/>
    </location>
</feature>
<feature type="strand" evidence="12">
    <location>
        <begin position="220"/>
        <end position="227"/>
    </location>
</feature>
<feature type="helix" evidence="12">
    <location>
        <begin position="228"/>
        <end position="239"/>
    </location>
</feature>
<feature type="strand" evidence="11">
    <location>
        <begin position="240"/>
        <end position="242"/>
    </location>
</feature>
<feature type="helix" evidence="12">
    <location>
        <begin position="248"/>
        <end position="255"/>
    </location>
</feature>
<feature type="strand" evidence="12">
    <location>
        <begin position="264"/>
        <end position="268"/>
    </location>
</feature>
<feature type="helix" evidence="12">
    <location>
        <begin position="273"/>
        <end position="279"/>
    </location>
</feature>
<comment type="function">
    <text evidence="5 6 7">Cytochrome bo(3) ubiquinol terminal oxidase is the component of the aerobic respiratory chain of E.coli that predominates when cells are grown at high aeration. Has proton pump activity across the membrane in addition to electron transfer, pumping 2 protons/electron.</text>
</comment>
<comment type="activity regulation">
    <text evidence="8">Competitively inhibited by piericidin A, non-competitively inhibited by 2-n-heptyl-4-hydroxyquinoline N-oxide, NaN(3) and KCN; 50% inhibition occurs at 2 uM, 2 uM, 15 mM and 10 uM, respectively. Inhibited by Zn(2+) and Cd(2+).</text>
</comment>
<comment type="subunit">
    <text evidence="3 4 7">Heterooctamer of two A chains, two B chains, two C chains and two D chains.</text>
</comment>
<comment type="subcellular location">
    <subcellularLocation>
        <location evidence="4 8">Cell inner membrane</location>
        <topology evidence="4 8">Multi-pass membrane protein</topology>
    </subcellularLocation>
</comment>
<comment type="disruption phenotype">
    <text evidence="5 6">Increased reduction of the ubiquinone pool (in aerobically grown minimal medium with glucose).</text>
</comment>
<comment type="similarity">
    <text evidence="9">Belongs to the cytochrome c oxidase subunit 2 family.</text>
</comment>
<protein>
    <recommendedName>
        <fullName>Cytochrome bo(3) ubiquinol oxidase subunit 2</fullName>
    </recommendedName>
    <alternativeName>
        <fullName>Cytochrome b562-o complex subunit II</fullName>
    </alternativeName>
    <alternativeName>
        <fullName>Cytochrome o ubiquinol oxidase subunit 2</fullName>
        <shortName>Cytochrome o subunit 2</shortName>
    </alternativeName>
    <alternativeName>
        <fullName>Oxidase bo(3) subunit 2</fullName>
    </alternativeName>
    <alternativeName>
        <fullName>Ubiquinol oxidase chain B</fullName>
    </alternativeName>
    <alternativeName>
        <fullName>Ubiquinol oxidase polypeptide II</fullName>
    </alternativeName>
    <alternativeName>
        <fullName>Ubiquinol oxidase subunit 2</fullName>
    </alternativeName>
</protein>
<proteinExistence type="evidence at protein level"/>
<gene>
    <name type="primary">cyoA</name>
    <name type="ordered locus">b0432</name>
    <name type="ordered locus">JW0422</name>
</gene>
<dbReference type="EMBL" id="J05492">
    <property type="protein sequence ID" value="AAA23631.1"/>
    <property type="molecule type" value="Genomic_DNA"/>
</dbReference>
<dbReference type="EMBL" id="U82664">
    <property type="protein sequence ID" value="AAB40188.1"/>
    <property type="molecule type" value="Genomic_DNA"/>
</dbReference>
<dbReference type="EMBL" id="U00096">
    <property type="protein sequence ID" value="AAC73535.1"/>
    <property type="molecule type" value="Genomic_DNA"/>
</dbReference>
<dbReference type="EMBL" id="AP009048">
    <property type="protein sequence ID" value="BAE76212.1"/>
    <property type="molecule type" value="Genomic_DNA"/>
</dbReference>
<dbReference type="EMBL" id="M55258">
    <property type="protein sequence ID" value="AAA23630.1"/>
    <property type="molecule type" value="Genomic_DNA"/>
</dbReference>
<dbReference type="EMBL" id="S67816">
    <property type="protein sequence ID" value="AAB28885.1"/>
    <property type="molecule type" value="Genomic_DNA"/>
</dbReference>
<dbReference type="PIR" id="A42226">
    <property type="entry name" value="A42226"/>
</dbReference>
<dbReference type="RefSeq" id="NP_414966.1">
    <property type="nucleotide sequence ID" value="NC_000913.3"/>
</dbReference>
<dbReference type="RefSeq" id="WP_001239436.1">
    <property type="nucleotide sequence ID" value="NZ_SSZK01000009.1"/>
</dbReference>
<dbReference type="PDB" id="1CYW">
    <property type="method" value="X-ray"/>
    <property type="resolution" value="2.50 A"/>
    <property type="chains" value="A=111-315"/>
</dbReference>
<dbReference type="PDB" id="1CYX">
    <property type="method" value="X-ray"/>
    <property type="resolution" value="2.30 A"/>
    <property type="chains" value="A=111-315"/>
</dbReference>
<dbReference type="PDB" id="1FFT">
    <property type="method" value="X-ray"/>
    <property type="resolution" value="3.50 A"/>
    <property type="chains" value="B/G=1-315"/>
</dbReference>
<dbReference type="PDB" id="6WTI">
    <property type="method" value="EM"/>
    <property type="resolution" value="2.38 A"/>
    <property type="chains" value="B=1-315"/>
</dbReference>
<dbReference type="PDB" id="7CUB">
    <property type="method" value="EM"/>
    <property type="resolution" value="2.55 A"/>
    <property type="chains" value="B=25-315"/>
</dbReference>
<dbReference type="PDB" id="7CUQ">
    <property type="method" value="EM"/>
    <property type="resolution" value="2.64 A"/>
    <property type="chains" value="B=25-315"/>
</dbReference>
<dbReference type="PDB" id="7CUW">
    <property type="method" value="EM"/>
    <property type="resolution" value="2.63 A"/>
    <property type="chains" value="B=25-315"/>
</dbReference>
<dbReference type="PDB" id="7N9Z">
    <property type="method" value="EM"/>
    <property type="resolution" value="2.19 A"/>
    <property type="chains" value="G=1-315"/>
</dbReference>
<dbReference type="PDB" id="7XMC">
    <property type="method" value="EM"/>
    <property type="resolution" value="3.09 A"/>
    <property type="chains" value="B=1-315"/>
</dbReference>
<dbReference type="PDB" id="7XMD">
    <property type="method" value="EM"/>
    <property type="resolution" value="2.99 A"/>
    <property type="chains" value="B=1-315"/>
</dbReference>
<dbReference type="PDB" id="8F68">
    <property type="method" value="EM"/>
    <property type="resolution" value="3.15 A"/>
    <property type="chains" value="B=24-283"/>
</dbReference>
<dbReference type="PDB" id="8F6C">
    <property type="method" value="EM"/>
    <property type="resolution" value="3.46 A"/>
    <property type="chains" value="B/F=24-283"/>
</dbReference>
<dbReference type="PDB" id="8GO3">
    <property type="method" value="EM"/>
    <property type="resolution" value="3.09 A"/>
    <property type="chains" value="B=1-315"/>
</dbReference>
<dbReference type="PDB" id="8QQK">
    <property type="method" value="EM"/>
    <property type="resolution" value="2.80 A"/>
    <property type="chains" value="B=1-315"/>
</dbReference>
<dbReference type="PDBsum" id="1CYW"/>
<dbReference type="PDBsum" id="1CYX"/>
<dbReference type="PDBsum" id="1FFT"/>
<dbReference type="PDBsum" id="6WTI"/>
<dbReference type="PDBsum" id="7CUB"/>
<dbReference type="PDBsum" id="7CUQ"/>
<dbReference type="PDBsum" id="7CUW"/>
<dbReference type="PDBsum" id="7N9Z"/>
<dbReference type="PDBsum" id="7XMC"/>
<dbReference type="PDBsum" id="7XMD"/>
<dbReference type="PDBsum" id="8F68"/>
<dbReference type="PDBsum" id="8F6C"/>
<dbReference type="PDBsum" id="8GO3"/>
<dbReference type="PDBsum" id="8QQK"/>
<dbReference type="EMDB" id="EMD-18594"/>
<dbReference type="EMDB" id="EMD-28877"/>
<dbReference type="EMDB" id="EMD-28879"/>
<dbReference type="EMDB" id="EMD-30471"/>
<dbReference type="EMDB" id="EMD-30474"/>
<dbReference type="EMDB" id="EMD-30475"/>
<dbReference type="EMDB" id="EMD-34171"/>
<dbReference type="SMR" id="P0ABJ1"/>
<dbReference type="BioGRID" id="4259512">
    <property type="interactions" value="315"/>
</dbReference>
<dbReference type="ComplexPortal" id="CPX-2102">
    <property type="entry name" value="Cytochrome bo3 ubiquinol oxidase complex"/>
</dbReference>
<dbReference type="DIP" id="DIP-47942N"/>
<dbReference type="FunCoup" id="P0ABJ1">
    <property type="interactions" value="377"/>
</dbReference>
<dbReference type="IntAct" id="P0ABJ1">
    <property type="interactions" value="23"/>
</dbReference>
<dbReference type="STRING" id="511145.b0432"/>
<dbReference type="TCDB" id="3.D.4.5.1">
    <property type="family name" value="the proton-translocating cytochrome oxidase (cox) superfamily"/>
</dbReference>
<dbReference type="jPOST" id="P0ABJ1"/>
<dbReference type="PaxDb" id="511145-b0432"/>
<dbReference type="EnsemblBacteria" id="AAC73535">
    <property type="protein sequence ID" value="AAC73535"/>
    <property type="gene ID" value="b0432"/>
</dbReference>
<dbReference type="GeneID" id="86862977"/>
<dbReference type="GeneID" id="945080"/>
<dbReference type="KEGG" id="ecj:JW0422"/>
<dbReference type="KEGG" id="eco:b0432"/>
<dbReference type="KEGG" id="ecoc:C3026_02110"/>
<dbReference type="PATRIC" id="fig|1411691.4.peg.1845"/>
<dbReference type="EchoBASE" id="EB0175"/>
<dbReference type="eggNOG" id="COG1622">
    <property type="taxonomic scope" value="Bacteria"/>
</dbReference>
<dbReference type="HOGENOM" id="CLU_036876_6_1_6"/>
<dbReference type="InParanoid" id="P0ABJ1"/>
<dbReference type="OMA" id="TAMNSFF"/>
<dbReference type="OrthoDB" id="9783445at2"/>
<dbReference type="PhylomeDB" id="P0ABJ1"/>
<dbReference type="BioCyc" id="EcoCyc:CYOA-MONOMER"/>
<dbReference type="BioCyc" id="MetaCyc:CYOA-MONOMER"/>
<dbReference type="BRENDA" id="7.1.1.3">
    <property type="organism ID" value="2026"/>
</dbReference>
<dbReference type="EvolutionaryTrace" id="P0ABJ1"/>
<dbReference type="PRO" id="PR:P0ABJ1"/>
<dbReference type="Proteomes" id="UP000000625">
    <property type="component" value="Chromosome"/>
</dbReference>
<dbReference type="GO" id="GO:0009319">
    <property type="term" value="C:cytochrome o ubiquinol oxidase complex"/>
    <property type="evidence" value="ECO:0000314"/>
    <property type="project" value="EcoCyc"/>
</dbReference>
<dbReference type="GO" id="GO:0005886">
    <property type="term" value="C:plasma membrane"/>
    <property type="evidence" value="ECO:0000314"/>
    <property type="project" value="ComplexPortal"/>
</dbReference>
<dbReference type="GO" id="GO:0005507">
    <property type="term" value="F:copper ion binding"/>
    <property type="evidence" value="ECO:0007669"/>
    <property type="project" value="InterPro"/>
</dbReference>
<dbReference type="GO" id="GO:0009486">
    <property type="term" value="F:cytochrome bo3 ubiquinol oxidase activity"/>
    <property type="evidence" value="ECO:0000314"/>
    <property type="project" value="EcoCyc"/>
</dbReference>
<dbReference type="GO" id="GO:0004129">
    <property type="term" value="F:cytochrome-c oxidase activity"/>
    <property type="evidence" value="ECO:0007669"/>
    <property type="project" value="InterPro"/>
</dbReference>
<dbReference type="GO" id="GO:0009055">
    <property type="term" value="F:electron transfer activity"/>
    <property type="evidence" value="ECO:0000314"/>
    <property type="project" value="EcoCyc"/>
</dbReference>
<dbReference type="GO" id="GO:0016682">
    <property type="term" value="F:oxidoreductase activity, acting on diphenols and related substances as donors, oxygen as acceptor"/>
    <property type="evidence" value="ECO:0007669"/>
    <property type="project" value="InterPro"/>
</dbReference>
<dbReference type="GO" id="GO:0015453">
    <property type="term" value="F:oxidoreduction-driven active transmembrane transporter activity"/>
    <property type="evidence" value="ECO:0000314"/>
    <property type="project" value="EcoCyc"/>
</dbReference>
<dbReference type="GO" id="GO:0015078">
    <property type="term" value="F:proton transmembrane transporter activity"/>
    <property type="evidence" value="ECO:0000314"/>
    <property type="project" value="EcoCyc"/>
</dbReference>
<dbReference type="GO" id="GO:0019646">
    <property type="term" value="P:aerobic electron transport chain"/>
    <property type="evidence" value="ECO:0000314"/>
    <property type="project" value="ComplexPortal"/>
</dbReference>
<dbReference type="GO" id="GO:0009060">
    <property type="term" value="P:aerobic respiration"/>
    <property type="evidence" value="ECO:0000315"/>
    <property type="project" value="EcoCyc"/>
</dbReference>
<dbReference type="GO" id="GO:0042773">
    <property type="term" value="P:ATP synthesis coupled electron transport"/>
    <property type="evidence" value="ECO:0000318"/>
    <property type="project" value="GO_Central"/>
</dbReference>
<dbReference type="GO" id="GO:0015990">
    <property type="term" value="P:electron transport coupled proton transport"/>
    <property type="evidence" value="ECO:0000314"/>
    <property type="project" value="ComplexPortal"/>
</dbReference>
<dbReference type="CDD" id="cd04212">
    <property type="entry name" value="CuRO_UO_II"/>
    <property type="match status" value="1"/>
</dbReference>
<dbReference type="FunFam" id="1.10.287.90:FF:000002">
    <property type="entry name" value="Ubiquinol oxidase subunit 2"/>
    <property type="match status" value="1"/>
</dbReference>
<dbReference type="FunFam" id="2.60.40.420:FF:000008">
    <property type="entry name" value="Ubiquinol oxidase subunit 2"/>
    <property type="match status" value="1"/>
</dbReference>
<dbReference type="Gene3D" id="1.10.287.90">
    <property type="match status" value="1"/>
</dbReference>
<dbReference type="Gene3D" id="2.60.40.420">
    <property type="entry name" value="Cupredoxins - blue copper proteins"/>
    <property type="match status" value="1"/>
</dbReference>
<dbReference type="InterPro" id="IPR045187">
    <property type="entry name" value="CcO_II"/>
</dbReference>
<dbReference type="InterPro" id="IPR002429">
    <property type="entry name" value="CcO_II-like_C"/>
</dbReference>
<dbReference type="InterPro" id="IPR010514">
    <property type="entry name" value="COX_ARM"/>
</dbReference>
<dbReference type="InterPro" id="IPR008972">
    <property type="entry name" value="Cupredoxin"/>
</dbReference>
<dbReference type="InterPro" id="IPR034227">
    <property type="entry name" value="CuRO_UO_II"/>
</dbReference>
<dbReference type="InterPro" id="IPR011759">
    <property type="entry name" value="Cyt_c_oxidase_su2_TM_dom"/>
</dbReference>
<dbReference type="InterPro" id="IPR036257">
    <property type="entry name" value="Cyt_c_oxidase_su2_TM_sf"/>
</dbReference>
<dbReference type="InterPro" id="IPR006333">
    <property type="entry name" value="Cyt_o_ubiquinol_oxidase_su2"/>
</dbReference>
<dbReference type="NCBIfam" id="TIGR01433">
    <property type="entry name" value="CyoA"/>
    <property type="match status" value="1"/>
</dbReference>
<dbReference type="NCBIfam" id="NF007816">
    <property type="entry name" value="PRK10525.1"/>
    <property type="match status" value="1"/>
</dbReference>
<dbReference type="PANTHER" id="PTHR22888:SF18">
    <property type="entry name" value="CYTOCHROME BO(3) UBIQUINOL OXIDASE SUBUNIT 2"/>
    <property type="match status" value="1"/>
</dbReference>
<dbReference type="PANTHER" id="PTHR22888">
    <property type="entry name" value="CYTOCHROME C OXIDASE, SUBUNIT II"/>
    <property type="match status" value="1"/>
</dbReference>
<dbReference type="Pfam" id="PF00116">
    <property type="entry name" value="COX2"/>
    <property type="match status" value="1"/>
</dbReference>
<dbReference type="Pfam" id="PF06481">
    <property type="entry name" value="COX_ARM"/>
    <property type="match status" value="1"/>
</dbReference>
<dbReference type="PIRSF" id="PIRSF000292">
    <property type="entry name" value="Ubi_od_II"/>
    <property type="match status" value="1"/>
</dbReference>
<dbReference type="SUPFAM" id="SSF49503">
    <property type="entry name" value="Cupredoxins"/>
    <property type="match status" value="1"/>
</dbReference>
<dbReference type="SUPFAM" id="SSF81464">
    <property type="entry name" value="Cytochrome c oxidase subunit II-like, transmembrane region"/>
    <property type="match status" value="1"/>
</dbReference>
<dbReference type="PROSITE" id="PS50857">
    <property type="entry name" value="COX2_CUA"/>
    <property type="match status" value="1"/>
</dbReference>
<dbReference type="PROSITE" id="PS50999">
    <property type="entry name" value="COX2_TM"/>
    <property type="match status" value="1"/>
</dbReference>
<dbReference type="PROSITE" id="PS51257">
    <property type="entry name" value="PROKAR_LIPOPROTEIN"/>
    <property type="match status" value="1"/>
</dbReference>
<organism>
    <name type="scientific">Escherichia coli (strain K12)</name>
    <dbReference type="NCBI Taxonomy" id="83333"/>
    <lineage>
        <taxon>Bacteria</taxon>
        <taxon>Pseudomonadati</taxon>
        <taxon>Pseudomonadota</taxon>
        <taxon>Gammaproteobacteria</taxon>
        <taxon>Enterobacterales</taxon>
        <taxon>Enterobacteriaceae</taxon>
        <taxon>Escherichia</taxon>
    </lineage>
</organism>
<keyword id="KW-0002">3D-structure</keyword>
<keyword id="KW-0997">Cell inner membrane</keyword>
<keyword id="KW-1003">Cell membrane</keyword>
<keyword id="KW-0903">Direct protein sequencing</keyword>
<keyword id="KW-0249">Electron transport</keyword>
<keyword id="KW-0449">Lipoprotein</keyword>
<keyword id="KW-0472">Membrane</keyword>
<keyword id="KW-0560">Oxidoreductase</keyword>
<keyword id="KW-0564">Palmitate</keyword>
<keyword id="KW-1185">Reference proteome</keyword>
<keyword id="KW-0679">Respiratory chain</keyword>
<keyword id="KW-0732">Signal</keyword>
<keyword id="KW-0812">Transmembrane</keyword>
<keyword id="KW-1133">Transmembrane helix</keyword>
<keyword id="KW-0813">Transport</keyword>